<accession>A5VJL5</accession>
<sequence length="73" mass="8803">MRMSFYQFLMTQRNPNSADEVQQFANNAFFDTTFPKHSEDFDEISHYLEENADYLPSMTIFDEAWQRYIDAMN</sequence>
<protein>
    <recommendedName>
        <fullName evidence="1">UPF0346 protein Lreu_0775</fullName>
    </recommendedName>
</protein>
<keyword id="KW-1185">Reference proteome</keyword>
<evidence type="ECO:0000255" key="1">
    <source>
        <dbReference type="HAMAP-Rule" id="MF_01538"/>
    </source>
</evidence>
<reference key="1">
    <citation type="journal article" date="2011" name="PLoS Genet.">
        <title>The evolution of host specialization in the vertebrate gut symbiont Lactobacillus reuteri.</title>
        <authorList>
            <person name="Frese S.A."/>
            <person name="Benson A.K."/>
            <person name="Tannock G.W."/>
            <person name="Loach D.M."/>
            <person name="Kim J."/>
            <person name="Zhang M."/>
            <person name="Oh P.L."/>
            <person name="Heng N.C."/>
            <person name="Patil P.B."/>
            <person name="Juge N."/>
            <person name="Mackenzie D.A."/>
            <person name="Pearson B.M."/>
            <person name="Lapidus A."/>
            <person name="Dalin E."/>
            <person name="Tice H."/>
            <person name="Goltsman E."/>
            <person name="Land M."/>
            <person name="Hauser L."/>
            <person name="Ivanova N."/>
            <person name="Kyrpides N.C."/>
            <person name="Walter J."/>
        </authorList>
    </citation>
    <scope>NUCLEOTIDE SEQUENCE [LARGE SCALE GENOMIC DNA]</scope>
    <source>
        <strain>DSM 20016</strain>
    </source>
</reference>
<gene>
    <name type="ordered locus">Lreu_0775</name>
</gene>
<proteinExistence type="inferred from homology"/>
<feature type="chain" id="PRO_1000068744" description="UPF0346 protein Lreu_0775">
    <location>
        <begin position="1"/>
        <end position="73"/>
    </location>
</feature>
<comment type="similarity">
    <text evidence="1">Belongs to the UPF0346 family.</text>
</comment>
<organism>
    <name type="scientific">Limosilactobacillus reuteri (strain DSM 20016)</name>
    <name type="common">Lactobacillus reuteri</name>
    <dbReference type="NCBI Taxonomy" id="557436"/>
    <lineage>
        <taxon>Bacteria</taxon>
        <taxon>Bacillati</taxon>
        <taxon>Bacillota</taxon>
        <taxon>Bacilli</taxon>
        <taxon>Lactobacillales</taxon>
        <taxon>Lactobacillaceae</taxon>
        <taxon>Limosilactobacillus</taxon>
    </lineage>
</organism>
<dbReference type="EMBL" id="CP000705">
    <property type="protein sequence ID" value="ABQ83039.1"/>
    <property type="molecule type" value="Genomic_DNA"/>
</dbReference>
<dbReference type="RefSeq" id="WP_003668092.1">
    <property type="nucleotide sequence ID" value="NC_009513.1"/>
</dbReference>
<dbReference type="SMR" id="A5VJL5"/>
<dbReference type="STRING" id="557436.Lreu_0775"/>
<dbReference type="KEGG" id="lre:Lreu_0775"/>
<dbReference type="eggNOG" id="COG4479">
    <property type="taxonomic scope" value="Bacteria"/>
</dbReference>
<dbReference type="HOGENOM" id="CLU_177534_1_0_9"/>
<dbReference type="Proteomes" id="UP000001991">
    <property type="component" value="Chromosome"/>
</dbReference>
<dbReference type="Gene3D" id="1.10.150.260">
    <property type="entry name" value="YozE SAM-like"/>
    <property type="match status" value="1"/>
</dbReference>
<dbReference type="HAMAP" id="MF_01538">
    <property type="entry name" value="UPF0346"/>
    <property type="match status" value="1"/>
</dbReference>
<dbReference type="InterPro" id="IPR010673">
    <property type="entry name" value="UPF0346"/>
</dbReference>
<dbReference type="InterPro" id="IPR023089">
    <property type="entry name" value="YozE_SAM-like"/>
</dbReference>
<dbReference type="InterPro" id="IPR036806">
    <property type="entry name" value="YozE_SAM-like_sf"/>
</dbReference>
<dbReference type="NCBIfam" id="NF010193">
    <property type="entry name" value="PRK13672.1"/>
    <property type="match status" value="1"/>
</dbReference>
<dbReference type="Pfam" id="PF06855">
    <property type="entry name" value="YozE_SAM_like"/>
    <property type="match status" value="1"/>
</dbReference>
<dbReference type="PIRSF" id="PIRSF037262">
    <property type="entry name" value="UCP037262"/>
    <property type="match status" value="1"/>
</dbReference>
<dbReference type="SUPFAM" id="SSF140652">
    <property type="entry name" value="YozE-like"/>
    <property type="match status" value="1"/>
</dbReference>
<name>Y775_LIMRD</name>